<gene>
    <name evidence="1" type="primary">purC</name>
    <name type="ordered locus">IL1458</name>
</gene>
<feature type="chain" id="PRO_1000018715" description="Phosphoribosylaminoimidazole-succinocarboxamide synthase">
    <location>
        <begin position="1"/>
        <end position="237"/>
    </location>
</feature>
<keyword id="KW-0067">ATP-binding</keyword>
<keyword id="KW-0436">Ligase</keyword>
<keyword id="KW-0547">Nucleotide-binding</keyword>
<keyword id="KW-0658">Purine biosynthesis</keyword>
<keyword id="KW-1185">Reference proteome</keyword>
<organism>
    <name type="scientific">Idiomarina loihiensis (strain ATCC BAA-735 / DSM 15497 / L2-TR)</name>
    <dbReference type="NCBI Taxonomy" id="283942"/>
    <lineage>
        <taxon>Bacteria</taxon>
        <taxon>Pseudomonadati</taxon>
        <taxon>Pseudomonadota</taxon>
        <taxon>Gammaproteobacteria</taxon>
        <taxon>Alteromonadales</taxon>
        <taxon>Idiomarinaceae</taxon>
        <taxon>Idiomarina</taxon>
    </lineage>
</organism>
<accession>Q5QU05</accession>
<dbReference type="EC" id="6.3.2.6" evidence="1"/>
<dbReference type="EMBL" id="AE017340">
    <property type="protein sequence ID" value="AAV82298.1"/>
    <property type="molecule type" value="Genomic_DNA"/>
</dbReference>
<dbReference type="RefSeq" id="WP_011234704.1">
    <property type="nucleotide sequence ID" value="NC_006512.1"/>
</dbReference>
<dbReference type="SMR" id="Q5QU05"/>
<dbReference type="STRING" id="283942.IL1458"/>
<dbReference type="GeneID" id="41336635"/>
<dbReference type="KEGG" id="ilo:IL1458"/>
<dbReference type="eggNOG" id="COG0152">
    <property type="taxonomic scope" value="Bacteria"/>
</dbReference>
<dbReference type="HOGENOM" id="CLU_061495_2_0_6"/>
<dbReference type="OrthoDB" id="9801549at2"/>
<dbReference type="UniPathway" id="UPA00074">
    <property type="reaction ID" value="UER00131"/>
</dbReference>
<dbReference type="Proteomes" id="UP000001171">
    <property type="component" value="Chromosome"/>
</dbReference>
<dbReference type="GO" id="GO:0005829">
    <property type="term" value="C:cytosol"/>
    <property type="evidence" value="ECO:0007669"/>
    <property type="project" value="TreeGrafter"/>
</dbReference>
<dbReference type="GO" id="GO:0005524">
    <property type="term" value="F:ATP binding"/>
    <property type="evidence" value="ECO:0007669"/>
    <property type="project" value="UniProtKB-KW"/>
</dbReference>
<dbReference type="GO" id="GO:0004639">
    <property type="term" value="F:phosphoribosylaminoimidazolesuccinocarboxamide synthase activity"/>
    <property type="evidence" value="ECO:0007669"/>
    <property type="project" value="UniProtKB-UniRule"/>
</dbReference>
<dbReference type="GO" id="GO:0006189">
    <property type="term" value="P:'de novo' IMP biosynthetic process"/>
    <property type="evidence" value="ECO:0007669"/>
    <property type="project" value="UniProtKB-UniRule"/>
</dbReference>
<dbReference type="GO" id="GO:0009236">
    <property type="term" value="P:cobalamin biosynthetic process"/>
    <property type="evidence" value="ECO:0007669"/>
    <property type="project" value="InterPro"/>
</dbReference>
<dbReference type="CDD" id="cd01415">
    <property type="entry name" value="SAICAR_synt_PurC"/>
    <property type="match status" value="1"/>
</dbReference>
<dbReference type="FunFam" id="3.30.200.20:FF:000086">
    <property type="entry name" value="Phosphoribosylaminoimidazole-succinocarboxamide synthase"/>
    <property type="match status" value="1"/>
</dbReference>
<dbReference type="FunFam" id="3.30.470.20:FF:000006">
    <property type="entry name" value="Phosphoribosylaminoimidazole-succinocarboxamide synthase"/>
    <property type="match status" value="1"/>
</dbReference>
<dbReference type="Gene3D" id="3.30.470.20">
    <property type="entry name" value="ATP-grasp fold, B domain"/>
    <property type="match status" value="1"/>
</dbReference>
<dbReference type="Gene3D" id="3.30.200.20">
    <property type="entry name" value="Phosphorylase Kinase, domain 1"/>
    <property type="match status" value="1"/>
</dbReference>
<dbReference type="HAMAP" id="MF_00137">
    <property type="entry name" value="SAICAR_synth"/>
    <property type="match status" value="1"/>
</dbReference>
<dbReference type="InterPro" id="IPR028923">
    <property type="entry name" value="SAICAR_synt/ADE2_N"/>
</dbReference>
<dbReference type="InterPro" id="IPR033934">
    <property type="entry name" value="SAICAR_synt_PurC"/>
</dbReference>
<dbReference type="InterPro" id="IPR001636">
    <property type="entry name" value="SAICAR_synth"/>
</dbReference>
<dbReference type="InterPro" id="IPR050089">
    <property type="entry name" value="SAICAR_synthetase"/>
</dbReference>
<dbReference type="InterPro" id="IPR018236">
    <property type="entry name" value="SAICAR_synthetase_CS"/>
</dbReference>
<dbReference type="NCBIfam" id="TIGR00081">
    <property type="entry name" value="purC"/>
    <property type="match status" value="1"/>
</dbReference>
<dbReference type="PANTHER" id="PTHR43599">
    <property type="entry name" value="MULTIFUNCTIONAL PROTEIN ADE2"/>
    <property type="match status" value="1"/>
</dbReference>
<dbReference type="PANTHER" id="PTHR43599:SF3">
    <property type="entry name" value="SI:DKEY-6E2.2"/>
    <property type="match status" value="1"/>
</dbReference>
<dbReference type="Pfam" id="PF01259">
    <property type="entry name" value="SAICAR_synt"/>
    <property type="match status" value="1"/>
</dbReference>
<dbReference type="SUPFAM" id="SSF56104">
    <property type="entry name" value="SAICAR synthase-like"/>
    <property type="match status" value="1"/>
</dbReference>
<dbReference type="PROSITE" id="PS01057">
    <property type="entry name" value="SAICAR_SYNTHETASE_1"/>
    <property type="match status" value="1"/>
</dbReference>
<dbReference type="PROSITE" id="PS01058">
    <property type="entry name" value="SAICAR_SYNTHETASE_2"/>
    <property type="match status" value="1"/>
</dbReference>
<protein>
    <recommendedName>
        <fullName evidence="1">Phosphoribosylaminoimidazole-succinocarboxamide synthase</fullName>
        <ecNumber evidence="1">6.3.2.6</ecNumber>
    </recommendedName>
    <alternativeName>
        <fullName evidence="1">SAICAR synthetase</fullName>
    </alternativeName>
</protein>
<evidence type="ECO:0000255" key="1">
    <source>
        <dbReference type="HAMAP-Rule" id="MF_00137"/>
    </source>
</evidence>
<proteinExistence type="inferred from homology"/>
<name>PUR7_IDILO</name>
<reference key="1">
    <citation type="journal article" date="2004" name="Proc. Natl. Acad. Sci. U.S.A.">
        <title>Genome sequence of the deep-sea gamma-proteobacterium Idiomarina loihiensis reveals amino acid fermentation as a source of carbon and energy.</title>
        <authorList>
            <person name="Hou S."/>
            <person name="Saw J.H."/>
            <person name="Lee K.S."/>
            <person name="Freitas T.A."/>
            <person name="Belisle C."/>
            <person name="Kawarabayasi Y."/>
            <person name="Donachie S.P."/>
            <person name="Pikina A."/>
            <person name="Galperin M.Y."/>
            <person name="Koonin E.V."/>
            <person name="Makarova K.S."/>
            <person name="Omelchenko M.V."/>
            <person name="Sorokin A."/>
            <person name="Wolf Y.I."/>
            <person name="Li Q.X."/>
            <person name="Keum Y.S."/>
            <person name="Campbell S."/>
            <person name="Denery J."/>
            <person name="Aizawa S."/>
            <person name="Shibata S."/>
            <person name="Malahoff A."/>
            <person name="Alam M."/>
        </authorList>
    </citation>
    <scope>NUCLEOTIDE SEQUENCE [LARGE SCALE GENOMIC DNA]</scope>
    <source>
        <strain>ATCC BAA-735 / DSM 15497 / L2-TR</strain>
    </source>
</reference>
<comment type="catalytic activity">
    <reaction evidence="1">
        <text>5-amino-1-(5-phospho-D-ribosyl)imidazole-4-carboxylate + L-aspartate + ATP = (2S)-2-[5-amino-1-(5-phospho-beta-D-ribosyl)imidazole-4-carboxamido]succinate + ADP + phosphate + 2 H(+)</text>
        <dbReference type="Rhea" id="RHEA:22628"/>
        <dbReference type="ChEBI" id="CHEBI:15378"/>
        <dbReference type="ChEBI" id="CHEBI:29991"/>
        <dbReference type="ChEBI" id="CHEBI:30616"/>
        <dbReference type="ChEBI" id="CHEBI:43474"/>
        <dbReference type="ChEBI" id="CHEBI:58443"/>
        <dbReference type="ChEBI" id="CHEBI:77657"/>
        <dbReference type="ChEBI" id="CHEBI:456216"/>
        <dbReference type="EC" id="6.3.2.6"/>
    </reaction>
</comment>
<comment type="pathway">
    <text evidence="1">Purine metabolism; IMP biosynthesis via de novo pathway; 5-amino-1-(5-phospho-D-ribosyl)imidazole-4-carboxamide from 5-amino-1-(5-phospho-D-ribosyl)imidazole-4-carboxylate: step 1/2.</text>
</comment>
<comment type="similarity">
    <text evidence="1">Belongs to the SAICAR synthetase family.</text>
</comment>
<sequence length="237" mass="27056">MEKRSELYRGKAKTVYHTDDPNRLVLEFRNDTSAFDGEKVEQLDDKGMVNNKFNHFIMSKLEEAGIPTQLDERLSDTESLVKKLDMIPVECVVRNVAAGSLVRRLGVEEGKELNPPTFEFFLKNDALHDPMVNEYHIQAFGWATAEQIEKMKELTFKVNDVLKALFADAGLLLVDYKLEFGVFDGEIMLGDEFTPDGCRLWDAETREKLDKDRFRQGLGGVVEAYREVAKRLGVTLD</sequence>